<feature type="chain" id="PRO_1000023902" description="Uroporphyrinogen decarboxylase">
    <location>
        <begin position="1"/>
        <end position="354"/>
    </location>
</feature>
<feature type="binding site" evidence="1">
    <location>
        <begin position="27"/>
        <end position="31"/>
    </location>
    <ligand>
        <name>substrate</name>
    </ligand>
</feature>
<feature type="binding site" evidence="1">
    <location>
        <position position="77"/>
    </location>
    <ligand>
        <name>substrate</name>
    </ligand>
</feature>
<feature type="binding site" evidence="1">
    <location>
        <position position="154"/>
    </location>
    <ligand>
        <name>substrate</name>
    </ligand>
</feature>
<feature type="binding site" evidence="1">
    <location>
        <position position="209"/>
    </location>
    <ligand>
        <name>substrate</name>
    </ligand>
</feature>
<feature type="binding site" evidence="1">
    <location>
        <position position="327"/>
    </location>
    <ligand>
        <name>substrate</name>
    </ligand>
</feature>
<feature type="site" description="Transition state stabilizer" evidence="1">
    <location>
        <position position="77"/>
    </location>
</feature>
<evidence type="ECO:0000255" key="1">
    <source>
        <dbReference type="HAMAP-Rule" id="MF_00218"/>
    </source>
</evidence>
<name>DCUP_ECOK1</name>
<reference key="1">
    <citation type="journal article" date="2007" name="J. Bacteriol.">
        <title>The genome sequence of avian pathogenic Escherichia coli strain O1:K1:H7 shares strong similarities with human extraintestinal pathogenic E. coli genomes.</title>
        <authorList>
            <person name="Johnson T.J."/>
            <person name="Kariyawasam S."/>
            <person name="Wannemuehler Y."/>
            <person name="Mangiamele P."/>
            <person name="Johnson S.J."/>
            <person name="Doetkott C."/>
            <person name="Skyberg J.A."/>
            <person name="Lynne A.M."/>
            <person name="Johnson J.R."/>
            <person name="Nolan L.K."/>
        </authorList>
    </citation>
    <scope>NUCLEOTIDE SEQUENCE [LARGE SCALE GENOMIC DNA]</scope>
</reference>
<comment type="function">
    <text evidence="1">Catalyzes the decarboxylation of four acetate groups of uroporphyrinogen-III to yield coproporphyrinogen-III.</text>
</comment>
<comment type="catalytic activity">
    <reaction evidence="1">
        <text>uroporphyrinogen III + 4 H(+) = coproporphyrinogen III + 4 CO2</text>
        <dbReference type="Rhea" id="RHEA:19865"/>
        <dbReference type="ChEBI" id="CHEBI:15378"/>
        <dbReference type="ChEBI" id="CHEBI:16526"/>
        <dbReference type="ChEBI" id="CHEBI:57308"/>
        <dbReference type="ChEBI" id="CHEBI:57309"/>
        <dbReference type="EC" id="4.1.1.37"/>
    </reaction>
</comment>
<comment type="pathway">
    <text evidence="1">Porphyrin-containing compound metabolism; protoporphyrin-IX biosynthesis; coproporphyrinogen-III from 5-aminolevulinate: step 4/4.</text>
</comment>
<comment type="subunit">
    <text evidence="1">Homodimer.</text>
</comment>
<comment type="subcellular location">
    <subcellularLocation>
        <location evidence="1">Cytoplasm</location>
    </subcellularLocation>
</comment>
<comment type="similarity">
    <text evidence="1">Belongs to the uroporphyrinogen decarboxylase family.</text>
</comment>
<accession>A1AIG8</accession>
<sequence>MTELKNDRYLRALLRQPVDVTPVWMMRQAGRYLPEYKATRAQAGDFMSLCKNAELACEVTLQPLRRYPLDAAILFSDILTVPDAMGLGLYFEAGEGPRFTSPVTCKADVDKLPIPDPEDELGYVMNAVRTIRRELKGEVPLIGFSGSPWTLATYMVEGGSSKAFTVIKKMMYADPQALHALLDKLAKSVTLYLNAQIKAGAQAVMIFDTWGGVLTGRDYQQFSLYYMHKIVDGLLRENDGRRVPVTLFTKGGGQWLEAMAETGCDALGLDWTTDIADARRRVGNKVALQGNMDPSMLYAPPARIEEEVASILAGFGHGEGHVFNLGHGIHQDVPPEHAGVFVEAVHRLSEQYHR</sequence>
<protein>
    <recommendedName>
        <fullName evidence="1">Uroporphyrinogen decarboxylase</fullName>
        <shortName evidence="1">UPD</shortName>
        <shortName evidence="1">URO-D</shortName>
        <ecNumber evidence="1">4.1.1.37</ecNumber>
    </recommendedName>
</protein>
<dbReference type="EC" id="4.1.1.37" evidence="1"/>
<dbReference type="EMBL" id="CP000468">
    <property type="protein sequence ID" value="ABJ03458.1"/>
    <property type="molecule type" value="Genomic_DNA"/>
</dbReference>
<dbReference type="RefSeq" id="WP_000137653.1">
    <property type="nucleotide sequence ID" value="NZ_CADILS010000053.1"/>
</dbReference>
<dbReference type="SMR" id="A1AIG8"/>
<dbReference type="KEGG" id="ecv:APECO1_2478"/>
<dbReference type="HOGENOM" id="CLU_040933_0_0_6"/>
<dbReference type="UniPathway" id="UPA00251">
    <property type="reaction ID" value="UER00321"/>
</dbReference>
<dbReference type="Proteomes" id="UP000008216">
    <property type="component" value="Chromosome"/>
</dbReference>
<dbReference type="GO" id="GO:0005829">
    <property type="term" value="C:cytosol"/>
    <property type="evidence" value="ECO:0007669"/>
    <property type="project" value="TreeGrafter"/>
</dbReference>
<dbReference type="GO" id="GO:0004853">
    <property type="term" value="F:uroporphyrinogen decarboxylase activity"/>
    <property type="evidence" value="ECO:0007669"/>
    <property type="project" value="UniProtKB-UniRule"/>
</dbReference>
<dbReference type="GO" id="GO:0019353">
    <property type="term" value="P:protoporphyrinogen IX biosynthetic process from glutamate"/>
    <property type="evidence" value="ECO:0007669"/>
    <property type="project" value="TreeGrafter"/>
</dbReference>
<dbReference type="CDD" id="cd00717">
    <property type="entry name" value="URO-D"/>
    <property type="match status" value="1"/>
</dbReference>
<dbReference type="FunFam" id="3.20.20.210:FF:000001">
    <property type="entry name" value="Uroporphyrinogen decarboxylase"/>
    <property type="match status" value="1"/>
</dbReference>
<dbReference type="Gene3D" id="3.20.20.210">
    <property type="match status" value="1"/>
</dbReference>
<dbReference type="HAMAP" id="MF_00218">
    <property type="entry name" value="URO_D"/>
    <property type="match status" value="1"/>
</dbReference>
<dbReference type="InterPro" id="IPR038071">
    <property type="entry name" value="UROD/MetE-like_sf"/>
</dbReference>
<dbReference type="InterPro" id="IPR006361">
    <property type="entry name" value="Uroporphyrinogen_deCO2ase_HemE"/>
</dbReference>
<dbReference type="InterPro" id="IPR000257">
    <property type="entry name" value="Uroporphyrinogen_deCOase"/>
</dbReference>
<dbReference type="NCBIfam" id="TIGR01464">
    <property type="entry name" value="hemE"/>
    <property type="match status" value="1"/>
</dbReference>
<dbReference type="PANTHER" id="PTHR21091">
    <property type="entry name" value="METHYLTETRAHYDROFOLATE:HOMOCYSTEINE METHYLTRANSFERASE RELATED"/>
    <property type="match status" value="1"/>
</dbReference>
<dbReference type="PANTHER" id="PTHR21091:SF169">
    <property type="entry name" value="UROPORPHYRINOGEN DECARBOXYLASE"/>
    <property type="match status" value="1"/>
</dbReference>
<dbReference type="Pfam" id="PF01208">
    <property type="entry name" value="URO-D"/>
    <property type="match status" value="1"/>
</dbReference>
<dbReference type="SUPFAM" id="SSF51726">
    <property type="entry name" value="UROD/MetE-like"/>
    <property type="match status" value="1"/>
</dbReference>
<dbReference type="PROSITE" id="PS00906">
    <property type="entry name" value="UROD_1"/>
    <property type="match status" value="1"/>
</dbReference>
<dbReference type="PROSITE" id="PS00907">
    <property type="entry name" value="UROD_2"/>
    <property type="match status" value="1"/>
</dbReference>
<gene>
    <name evidence="1" type="primary">hemE</name>
    <name type="ordered locus">Ecok1_39640</name>
    <name type="ORF">APECO1_2478</name>
</gene>
<organism>
    <name type="scientific">Escherichia coli O1:K1 / APEC</name>
    <dbReference type="NCBI Taxonomy" id="405955"/>
    <lineage>
        <taxon>Bacteria</taxon>
        <taxon>Pseudomonadati</taxon>
        <taxon>Pseudomonadota</taxon>
        <taxon>Gammaproteobacteria</taxon>
        <taxon>Enterobacterales</taxon>
        <taxon>Enterobacteriaceae</taxon>
        <taxon>Escherichia</taxon>
    </lineage>
</organism>
<proteinExistence type="inferred from homology"/>
<keyword id="KW-0963">Cytoplasm</keyword>
<keyword id="KW-0210">Decarboxylase</keyword>
<keyword id="KW-0456">Lyase</keyword>
<keyword id="KW-0627">Porphyrin biosynthesis</keyword>
<keyword id="KW-1185">Reference proteome</keyword>